<dbReference type="EC" id="2.1.1.177" evidence="1"/>
<dbReference type="EMBL" id="CP000050">
    <property type="protein sequence ID" value="AAY48571.1"/>
    <property type="molecule type" value="Genomic_DNA"/>
</dbReference>
<dbReference type="RefSeq" id="WP_011037743.1">
    <property type="nucleotide sequence ID" value="NZ_CP155948.1"/>
</dbReference>
<dbReference type="SMR" id="Q4UWK2"/>
<dbReference type="GeneID" id="58012787"/>
<dbReference type="KEGG" id="xcb:XC_1503"/>
<dbReference type="HOGENOM" id="CLU_100552_1_0_6"/>
<dbReference type="Proteomes" id="UP000000420">
    <property type="component" value="Chromosome"/>
</dbReference>
<dbReference type="GO" id="GO:0005737">
    <property type="term" value="C:cytoplasm"/>
    <property type="evidence" value="ECO:0007669"/>
    <property type="project" value="UniProtKB-SubCell"/>
</dbReference>
<dbReference type="GO" id="GO:0070038">
    <property type="term" value="F:rRNA (pseudouridine-N3-)-methyltransferase activity"/>
    <property type="evidence" value="ECO:0007669"/>
    <property type="project" value="UniProtKB-UniRule"/>
</dbReference>
<dbReference type="CDD" id="cd18081">
    <property type="entry name" value="RlmH-like"/>
    <property type="match status" value="1"/>
</dbReference>
<dbReference type="Gene3D" id="3.40.1280.10">
    <property type="match status" value="1"/>
</dbReference>
<dbReference type="HAMAP" id="MF_00658">
    <property type="entry name" value="23SrRNA_methyltr_H"/>
    <property type="match status" value="1"/>
</dbReference>
<dbReference type="InterPro" id="IPR029028">
    <property type="entry name" value="Alpha/beta_knot_MTases"/>
</dbReference>
<dbReference type="InterPro" id="IPR003742">
    <property type="entry name" value="RlmH-like"/>
</dbReference>
<dbReference type="InterPro" id="IPR029026">
    <property type="entry name" value="tRNA_m1G_MTases_N"/>
</dbReference>
<dbReference type="NCBIfam" id="NF000986">
    <property type="entry name" value="PRK00103.1-4"/>
    <property type="match status" value="1"/>
</dbReference>
<dbReference type="NCBIfam" id="TIGR00246">
    <property type="entry name" value="tRNA_RlmH_YbeA"/>
    <property type="match status" value="1"/>
</dbReference>
<dbReference type="PANTHER" id="PTHR33603">
    <property type="entry name" value="METHYLTRANSFERASE"/>
    <property type="match status" value="1"/>
</dbReference>
<dbReference type="PANTHER" id="PTHR33603:SF1">
    <property type="entry name" value="RIBOSOMAL RNA LARGE SUBUNIT METHYLTRANSFERASE H"/>
    <property type="match status" value="1"/>
</dbReference>
<dbReference type="Pfam" id="PF02590">
    <property type="entry name" value="SPOUT_MTase"/>
    <property type="match status" value="1"/>
</dbReference>
<dbReference type="PIRSF" id="PIRSF004505">
    <property type="entry name" value="MT_bac"/>
    <property type="match status" value="1"/>
</dbReference>
<dbReference type="SUPFAM" id="SSF75217">
    <property type="entry name" value="alpha/beta knot"/>
    <property type="match status" value="1"/>
</dbReference>
<name>RLMH_XANC8</name>
<gene>
    <name evidence="1" type="primary">rlmH</name>
    <name type="ordered locus">XC_1503</name>
</gene>
<feature type="chain" id="PRO_0000260629" description="Ribosomal RNA large subunit methyltransferase H">
    <location>
        <begin position="1"/>
        <end position="156"/>
    </location>
</feature>
<feature type="binding site" evidence="1">
    <location>
        <position position="73"/>
    </location>
    <ligand>
        <name>S-adenosyl-L-methionine</name>
        <dbReference type="ChEBI" id="CHEBI:59789"/>
    </ligand>
</feature>
<feature type="binding site" evidence="1">
    <location>
        <position position="104"/>
    </location>
    <ligand>
        <name>S-adenosyl-L-methionine</name>
        <dbReference type="ChEBI" id="CHEBI:59789"/>
    </ligand>
</feature>
<feature type="binding site" evidence="1">
    <location>
        <begin position="123"/>
        <end position="128"/>
    </location>
    <ligand>
        <name>S-adenosyl-L-methionine</name>
        <dbReference type="ChEBI" id="CHEBI:59789"/>
    </ligand>
</feature>
<reference key="1">
    <citation type="journal article" date="2005" name="Genome Res.">
        <title>Comparative and functional genomic analyses of the pathogenicity of phytopathogen Xanthomonas campestris pv. campestris.</title>
        <authorList>
            <person name="Qian W."/>
            <person name="Jia Y."/>
            <person name="Ren S.-X."/>
            <person name="He Y.-Q."/>
            <person name="Feng J.-X."/>
            <person name="Lu L.-F."/>
            <person name="Sun Q."/>
            <person name="Ying G."/>
            <person name="Tang D.-J."/>
            <person name="Tang H."/>
            <person name="Wu W."/>
            <person name="Hao P."/>
            <person name="Wang L."/>
            <person name="Jiang B.-L."/>
            <person name="Zeng S."/>
            <person name="Gu W.-Y."/>
            <person name="Lu G."/>
            <person name="Rong L."/>
            <person name="Tian Y."/>
            <person name="Yao Z."/>
            <person name="Fu G."/>
            <person name="Chen B."/>
            <person name="Fang R."/>
            <person name="Qiang B."/>
            <person name="Chen Z."/>
            <person name="Zhao G.-P."/>
            <person name="Tang J.-L."/>
            <person name="He C."/>
        </authorList>
    </citation>
    <scope>NUCLEOTIDE SEQUENCE [LARGE SCALE GENOMIC DNA]</scope>
    <source>
        <strain>8004</strain>
    </source>
</reference>
<comment type="function">
    <text evidence="1">Specifically methylates the pseudouridine at position 1915 (m3Psi1915) in 23S rRNA.</text>
</comment>
<comment type="catalytic activity">
    <reaction evidence="1">
        <text>pseudouridine(1915) in 23S rRNA + S-adenosyl-L-methionine = N(3)-methylpseudouridine(1915) in 23S rRNA + S-adenosyl-L-homocysteine + H(+)</text>
        <dbReference type="Rhea" id="RHEA:42752"/>
        <dbReference type="Rhea" id="RHEA-COMP:10221"/>
        <dbReference type="Rhea" id="RHEA-COMP:10222"/>
        <dbReference type="ChEBI" id="CHEBI:15378"/>
        <dbReference type="ChEBI" id="CHEBI:57856"/>
        <dbReference type="ChEBI" id="CHEBI:59789"/>
        <dbReference type="ChEBI" id="CHEBI:65314"/>
        <dbReference type="ChEBI" id="CHEBI:74486"/>
        <dbReference type="EC" id="2.1.1.177"/>
    </reaction>
</comment>
<comment type="subunit">
    <text evidence="1">Homodimer.</text>
</comment>
<comment type="subcellular location">
    <subcellularLocation>
        <location evidence="1">Cytoplasm</location>
    </subcellularLocation>
</comment>
<comment type="similarity">
    <text evidence="1">Belongs to the RNA methyltransferase RlmH family.</text>
</comment>
<evidence type="ECO:0000255" key="1">
    <source>
        <dbReference type="HAMAP-Rule" id="MF_00658"/>
    </source>
</evidence>
<keyword id="KW-0963">Cytoplasm</keyword>
<keyword id="KW-0489">Methyltransferase</keyword>
<keyword id="KW-0698">rRNA processing</keyword>
<keyword id="KW-0949">S-adenosyl-L-methionine</keyword>
<keyword id="KW-0808">Transferase</keyword>
<accession>Q4UWK2</accession>
<protein>
    <recommendedName>
        <fullName evidence="1">Ribosomal RNA large subunit methyltransferase H</fullName>
        <ecNumber evidence="1">2.1.1.177</ecNumber>
    </recommendedName>
    <alternativeName>
        <fullName evidence="1">23S rRNA (pseudouridine1915-N3)-methyltransferase</fullName>
    </alternativeName>
    <alternativeName>
        <fullName evidence="1">23S rRNA m3Psi1915 methyltransferase</fullName>
    </alternativeName>
    <alternativeName>
        <fullName evidence="1">rRNA (pseudouridine-N3-)-methyltransferase RlmH</fullName>
    </alternativeName>
</protein>
<organism>
    <name type="scientific">Xanthomonas campestris pv. campestris (strain 8004)</name>
    <dbReference type="NCBI Taxonomy" id="314565"/>
    <lineage>
        <taxon>Bacteria</taxon>
        <taxon>Pseudomonadati</taxon>
        <taxon>Pseudomonadota</taxon>
        <taxon>Gammaproteobacteria</taxon>
        <taxon>Lysobacterales</taxon>
        <taxon>Lysobacteraceae</taxon>
        <taxon>Xanthomonas</taxon>
    </lineage>
</organism>
<sequence>MKCRLIATGERAPAWVAQGFAEYQKRLSHWMPLELVEIEPGLRGKGRDAQRAIDDEGRRVLAALPKNAHVVALDVPGRPLSSEQLAQRMEHWRGQGRDLAFLIGGPEGHAADVVKSANESWSIGPLTLPHMLVRLIVAEQLYRAAAMLANHPYHRA</sequence>
<proteinExistence type="inferred from homology"/>